<gene>
    <name evidence="18" type="primary">CDC42BPG</name>
    <name type="synonym">DMPK2</name>
</gene>
<protein>
    <recommendedName>
        <fullName>Serine/threonine-protein kinase MRCK gamma</fullName>
        <ecNumber>2.7.11.1</ecNumber>
    </recommendedName>
    <alternativeName>
        <fullName>CDC42-binding protein kinase gamma</fullName>
    </alternativeName>
    <alternativeName>
        <fullName>DMPK-like gamma</fullName>
    </alternativeName>
    <alternativeName>
        <fullName>Myotonic dystrophy kinase-related CDC42-binding kinase gamma</fullName>
        <shortName>MRCK gamma</shortName>
        <shortName>MRCKG</shortName>
        <shortName>Myotonic dystrophy protein kinase-like gamma</shortName>
    </alternativeName>
    <alternativeName>
        <fullName>Myotonic dystrophy protein kinase-like alpha</fullName>
    </alternativeName>
</protein>
<keyword id="KW-0067">ATP-binding</keyword>
<keyword id="KW-0175">Coiled coil</keyword>
<keyword id="KW-0963">Cytoplasm</keyword>
<keyword id="KW-0418">Kinase</keyword>
<keyword id="KW-0460">Magnesium</keyword>
<keyword id="KW-0479">Metal-binding</keyword>
<keyword id="KW-0547">Nucleotide-binding</keyword>
<keyword id="KW-0597">Phosphoprotein</keyword>
<keyword id="KW-1267">Proteomics identification</keyword>
<keyword id="KW-1185">Reference proteome</keyword>
<keyword id="KW-0723">Serine/threonine-protein kinase</keyword>
<keyword id="KW-0808">Transferase</keyword>
<keyword id="KW-0862">Zinc</keyword>
<keyword id="KW-0863">Zinc-finger</keyword>
<reference evidence="15 16" key="1">
    <citation type="journal article" date="2004" name="J. Biol. Chem.">
        <title>Expression of the human myotonic dystrophy kinase-related Cdc42-binding kinase gamma is regulated by promoter DNA methylation and Sp1 binding.</title>
        <authorList>
            <person name="Ng Y."/>
            <person name="Tan I."/>
            <person name="Lim L."/>
            <person name="Leung T."/>
        </authorList>
    </citation>
    <scope>NUCLEOTIDE SEQUENCE [MRNA]</scope>
    <scope>FUNCTION</scope>
    <scope>SUBCELLULAR LOCATION</scope>
    <scope>TISSUE SPECIFICITY</scope>
    <source>
        <tissue evidence="13">Colon</tissue>
    </source>
</reference>
<reference key="2">
    <citation type="journal article" date="2006" name="Nature">
        <title>Human chromosome 11 DNA sequence and analysis including novel gene identification.</title>
        <authorList>
            <person name="Taylor T.D."/>
            <person name="Noguchi H."/>
            <person name="Totoki Y."/>
            <person name="Toyoda A."/>
            <person name="Kuroki Y."/>
            <person name="Dewar K."/>
            <person name="Lloyd C."/>
            <person name="Itoh T."/>
            <person name="Takeda T."/>
            <person name="Kim D.-W."/>
            <person name="She X."/>
            <person name="Barlow K.F."/>
            <person name="Bloom T."/>
            <person name="Bruford E."/>
            <person name="Chang J.L."/>
            <person name="Cuomo C.A."/>
            <person name="Eichler E."/>
            <person name="FitzGerald M.G."/>
            <person name="Jaffe D.B."/>
            <person name="LaButti K."/>
            <person name="Nicol R."/>
            <person name="Park H.-S."/>
            <person name="Seaman C."/>
            <person name="Sougnez C."/>
            <person name="Yang X."/>
            <person name="Zimmer A.R."/>
            <person name="Zody M.C."/>
            <person name="Birren B.W."/>
            <person name="Nusbaum C."/>
            <person name="Fujiyama A."/>
            <person name="Hattori M."/>
            <person name="Rogers J."/>
            <person name="Lander E.S."/>
            <person name="Sakaki Y."/>
        </authorList>
    </citation>
    <scope>NUCLEOTIDE SEQUENCE [LARGE SCALE GENOMIC DNA]</scope>
</reference>
<reference evidence="15 17" key="3">
    <citation type="journal article" date="1997" name="Hum. Genet.">
        <title>The germinal centre kinase gene and a novel CDC25-like gene are located in the vicinity of the PYGM gene on 11q13.</title>
        <authorList>
            <person name="Kedra D."/>
            <person name="Seroussi E."/>
            <person name="Fransson I."/>
            <person name="Trifunovic J."/>
            <person name="Clark M."/>
            <person name="Lagercrantz J."/>
            <person name="Blennow E."/>
            <person name="Mehlin H."/>
            <person name="Dumanski J."/>
        </authorList>
    </citation>
    <scope>NUCLEOTIDE SEQUENCE [MRNA] OF 113-401</scope>
</reference>
<reference key="4">
    <citation type="journal article" date="2013" name="J. Proteome Res.">
        <title>Toward a comprehensive characterization of a human cancer cell phosphoproteome.</title>
        <authorList>
            <person name="Zhou H."/>
            <person name="Di Palma S."/>
            <person name="Preisinger C."/>
            <person name="Peng M."/>
            <person name="Polat A.N."/>
            <person name="Heck A.J."/>
            <person name="Mohammed S."/>
        </authorList>
    </citation>
    <scope>PHOSPHORYLATION [LARGE SCALE ANALYSIS] AT SER-1482</scope>
    <scope>IDENTIFICATION BY MASS SPECTROMETRY [LARGE SCALE ANALYSIS]</scope>
    <source>
        <tissue>Erythroleukemia</tissue>
    </source>
</reference>
<reference key="5">
    <citation type="journal article" date="2007" name="Nature">
        <title>Patterns of somatic mutation in human cancer genomes.</title>
        <authorList>
            <person name="Greenman C."/>
            <person name="Stephens P."/>
            <person name="Smith R."/>
            <person name="Dalgliesh G.L."/>
            <person name="Hunter C."/>
            <person name="Bignell G."/>
            <person name="Davies H."/>
            <person name="Teague J."/>
            <person name="Butler A."/>
            <person name="Stevens C."/>
            <person name="Edkins S."/>
            <person name="O'Meara S."/>
            <person name="Vastrik I."/>
            <person name="Schmidt E.E."/>
            <person name="Avis T."/>
            <person name="Barthorpe S."/>
            <person name="Bhamra G."/>
            <person name="Buck G."/>
            <person name="Choudhury B."/>
            <person name="Clements J."/>
            <person name="Cole J."/>
            <person name="Dicks E."/>
            <person name="Forbes S."/>
            <person name="Gray K."/>
            <person name="Halliday K."/>
            <person name="Harrison R."/>
            <person name="Hills K."/>
            <person name="Hinton J."/>
            <person name="Jenkinson A."/>
            <person name="Jones D."/>
            <person name="Menzies A."/>
            <person name="Mironenko T."/>
            <person name="Perry J."/>
            <person name="Raine K."/>
            <person name="Richardson D."/>
            <person name="Shepherd R."/>
            <person name="Small A."/>
            <person name="Tofts C."/>
            <person name="Varian J."/>
            <person name="Webb T."/>
            <person name="West S."/>
            <person name="Widaa S."/>
            <person name="Yates A."/>
            <person name="Cahill D.P."/>
            <person name="Louis D.N."/>
            <person name="Goldstraw P."/>
            <person name="Nicholson A.G."/>
            <person name="Brasseur F."/>
            <person name="Looijenga L."/>
            <person name="Weber B.L."/>
            <person name="Chiew Y.-E."/>
            <person name="DeFazio A."/>
            <person name="Greaves M.F."/>
            <person name="Green A.R."/>
            <person name="Campbell P."/>
            <person name="Birney E."/>
            <person name="Easton D.F."/>
            <person name="Chenevix-Trench G."/>
            <person name="Tan M.-H."/>
            <person name="Khoo S.K."/>
            <person name="Teh B.T."/>
            <person name="Yuen S.T."/>
            <person name="Leung S.Y."/>
            <person name="Wooster R."/>
            <person name="Futreal P.A."/>
            <person name="Stratton M.R."/>
        </authorList>
    </citation>
    <scope>VARIANTS [LARGE SCALE ANALYSIS] LEU-168; PHE-280; PRO-362 AND ASP-537</scope>
</reference>
<sequence length="1551" mass="172459">MERRLRALEQLARGEAGGCPGLDGLLDLLLALHHELSSGPLRRERSVAQFLSWASPFVSKVKELRLQRDDFEILKVIGRGAFGEVTVVRQRDTGQIFAMKMLHKWEMLKRAETACFREERDVLVKGDSRWVTTLHYAFQDEEYLYLVMDYYAGGDLLTLLSRFEDRLPPELAQFYLAEMVLAIHSLHQLGYVHRDVKPDNVLLDVNGHIRLADFGSCLRLNTNGMVDSSVAVGTPDYISPEILQAMEEGKGHYGPQCDWWSLGVCAYELLFGETPFYAESLVETYGKIMNHEDHLQFPPDVPDVPASAQDLIRQLLCRQEERLGRGGLDDFRNHPFFEGVDWERLASSTAPYIPELRGPMDTSNFDVDDDTLNHPGTLPPPSHGAFSGHHLPFVGFTYTSGSHSPESSSEAWAALERKLQCLEQEKVELSRKHQEALHAPTDHRELEQLRKEVQTLRDRLPEMLRDKASLSQTDGPPAGSPGQDSDLRQELDRLHRELAEGRAGLQAQEQELCRAQGQQEELLQRLQEAQEREAATASQTRALSSQLEEARAAQRELEAQVSSLSRQVTQLQGQWEQRLEESSQAKTIHTASETNGMGPPEGGPQEAQLRKEVAALREQLEQAHSHRPSGKEEALCQLQEENRRLSREQERLEAELAQEQESKQRLEGERRETESNWEAQLADILSWVNDEKVSRGYLQALATKMAEELESLRNVGTQTLPARPLDHQWKARRLQKMEASARLELQSALEAEIRAKQGLQERLTQVQEAQLQAERRLQEAEKQSQALQQELAMLREELRARGPVDTKPSNSLIPFLSFRSSEKDSAKDPGISGEATRHGGEPDLRPEGRRSLRMGAVFPRAPTANTASTEGLPAKPGSHTLRPRSFPSPTKCLRCTSLMLGLGRQGLGCDACGYFCHTTCAPQAPPCPVPPDLLRTALGVHPETGTGTAYEGFLSVPRPSGVRRGWQRVFAALSDSRLLLFDAPDLRLSPPSGALLQVLDLRDPQFSATPVLASDVIHAQSRDLPRIFRVTTSQLAVPPTTCTVLLLAESEGERERWLQVLGELQRLLLDARPRPRPVYTLKEAYDNGLPLLPHTLCAAILDQDRLALGTEEGLFVIHLRSNDIFQVGECRRVQQLTLSPSAGLLVVLCGRGPSVRLFALAELENIEVAGAKIPESRGCQVLAAGSILQARTPVLCVAVKRQVLCYQLGPGPGPWQRRIRELQAPATVQSLGLLGDRLCVGAAGGFALYPLLNEAAPLALGAGLVPEELPPSRGGLGEALGAVELSLSEFLLLFTTAGIYVDGAGRKSRGHELLWPAAPMGWGYAAPYLTVFSENSIDVFDVRRAEWVQTVPLKKVRPLNPEGSLFLYGTEKVRLTYLRNQLAEKDEFDIPDLTDNSRRQLFRTKSKRRFFFRVSEEQQKQQRREMLKDPFVRSKLISPPTNFNHLVHVGPANGRPGARDKSPAPEEKGRVARGSGPQRPHSFSEALRRPASMGSEGLGGDADPMKRKPWTSLSSESVSCPQGSLSPATSLMQVSERPRSLPLSPELESSP</sequence>
<feature type="chain" id="PRO_0000086397" description="Serine/threonine-protein kinase MRCK gamma">
    <location>
        <begin position="1"/>
        <end position="1551"/>
    </location>
</feature>
<feature type="domain" description="Protein kinase" evidence="7 13">
    <location>
        <begin position="71"/>
        <end position="337"/>
    </location>
</feature>
<feature type="domain" description="AGC-kinase C-terminal" evidence="9">
    <location>
        <begin position="338"/>
        <end position="408"/>
    </location>
</feature>
<feature type="domain" description="PH" evidence="6">
    <location>
        <begin position="947"/>
        <end position="1066"/>
    </location>
</feature>
<feature type="domain" description="CNH" evidence="10">
    <location>
        <begin position="1092"/>
        <end position="1366"/>
    </location>
</feature>
<feature type="domain" description="CRIB" evidence="5">
    <location>
        <begin position="1437"/>
        <end position="1450"/>
    </location>
</feature>
<feature type="zinc finger region" description="Phorbol-ester/DAG-type" evidence="8">
    <location>
        <begin position="878"/>
        <end position="927"/>
    </location>
</feature>
<feature type="region of interest" description="Disordered" evidence="12">
    <location>
        <begin position="467"/>
        <end position="486"/>
    </location>
</feature>
<feature type="region of interest" description="Disordered" evidence="12">
    <location>
        <begin position="655"/>
        <end position="675"/>
    </location>
</feature>
<feature type="region of interest" description="Disordered" evidence="12">
    <location>
        <begin position="801"/>
        <end position="849"/>
    </location>
</feature>
<feature type="region of interest" description="Disordered" evidence="12">
    <location>
        <begin position="863"/>
        <end position="886"/>
    </location>
</feature>
<feature type="region of interest" description="Disordered" evidence="12">
    <location>
        <begin position="1442"/>
        <end position="1551"/>
    </location>
</feature>
<feature type="coiled-coil region" evidence="4">
    <location>
        <begin position="406"/>
        <end position="678"/>
    </location>
</feature>
<feature type="coiled-coil region" evidence="4">
    <location>
        <begin position="730"/>
        <end position="802"/>
    </location>
</feature>
<feature type="compositionally biased region" description="Basic and acidic residues" evidence="12">
    <location>
        <begin position="655"/>
        <end position="674"/>
    </location>
</feature>
<feature type="compositionally biased region" description="Basic and acidic residues" evidence="12">
    <location>
        <begin position="835"/>
        <end position="849"/>
    </location>
</feature>
<feature type="compositionally biased region" description="Basic and acidic residues" evidence="12">
    <location>
        <begin position="1457"/>
        <end position="1470"/>
    </location>
</feature>
<feature type="compositionally biased region" description="Polar residues" evidence="12">
    <location>
        <begin position="1511"/>
        <end position="1533"/>
    </location>
</feature>
<feature type="compositionally biased region" description="Low complexity" evidence="12">
    <location>
        <begin position="1540"/>
        <end position="1551"/>
    </location>
</feature>
<feature type="active site" description="Proton acceptor" evidence="2 7 11">
    <location>
        <position position="195"/>
    </location>
</feature>
<feature type="binding site" evidence="2 7">
    <location>
        <begin position="77"/>
        <end position="85"/>
    </location>
    <ligand>
        <name>ATP</name>
        <dbReference type="ChEBI" id="CHEBI:30616"/>
    </ligand>
</feature>
<feature type="binding site" evidence="7 13">
    <location>
        <position position="100"/>
    </location>
    <ligand>
        <name>ATP</name>
        <dbReference type="ChEBI" id="CHEBI:30616"/>
    </ligand>
</feature>
<feature type="modified residue" description="Phosphoserine; by autocatalysis" evidence="1">
    <location>
        <position position="216"/>
    </location>
</feature>
<feature type="modified residue" description="Phosphoserine; by autocatalysis" evidence="1">
    <location>
        <position position="228"/>
    </location>
</feature>
<feature type="modified residue" description="Phosphothreonine; by autocatalysis" evidence="1">
    <location>
        <position position="234"/>
    </location>
</feature>
<feature type="modified residue" description="Phosphoserine" evidence="19">
    <location>
        <position position="1482"/>
    </location>
</feature>
<feature type="sequence variant" id="VAR_040840" description="In dbSNP:rs34454471." evidence="14">
    <original>P</original>
    <variation>L</variation>
    <location>
        <position position="168"/>
    </location>
</feature>
<feature type="sequence variant" id="VAR_040841" description="In a glioblastoma multiforme sample; somatic mutation; dbSNP:rs770462360." evidence="14">
    <original>S</original>
    <variation>F</variation>
    <location>
        <position position="280"/>
    </location>
</feature>
<feature type="sequence variant" id="VAR_040842" description="In dbSNP:rs55688429." evidence="14">
    <original>T</original>
    <variation>P</variation>
    <location>
        <position position="362"/>
    </location>
</feature>
<feature type="sequence variant" id="VAR_040843" description="In dbSNP:rs34241745." evidence="14">
    <original>A</original>
    <variation>D</variation>
    <location>
        <position position="537"/>
    </location>
</feature>
<feature type="sequence variant" id="VAR_057105" description="In dbSNP:rs3741395.">
    <original>Q</original>
    <variation>R</variation>
    <location>
        <position position="1135"/>
    </location>
</feature>
<feature type="sequence conflict" description="In Ref. 1; AAT67172." evidence="15" ref="1">
    <original>P</original>
    <variation>R</variation>
    <location>
        <position position="628"/>
    </location>
</feature>
<name>MRCKG_HUMAN</name>
<organism>
    <name type="scientific">Homo sapiens</name>
    <name type="common">Human</name>
    <dbReference type="NCBI Taxonomy" id="9606"/>
    <lineage>
        <taxon>Eukaryota</taxon>
        <taxon>Metazoa</taxon>
        <taxon>Chordata</taxon>
        <taxon>Craniata</taxon>
        <taxon>Vertebrata</taxon>
        <taxon>Euteleostomi</taxon>
        <taxon>Mammalia</taxon>
        <taxon>Eutheria</taxon>
        <taxon>Euarchontoglires</taxon>
        <taxon>Primates</taxon>
        <taxon>Haplorrhini</taxon>
        <taxon>Catarrhini</taxon>
        <taxon>Hominidae</taxon>
        <taxon>Homo</taxon>
    </lineage>
</organism>
<proteinExistence type="evidence at protein level"/>
<comment type="function">
    <text evidence="3 13">May act as a downstream effector of CDC42 in cytoskeletal reorganization. Contributes to the actomyosin contractility required for cell invasion, through the regulation of MYPT1 and thus MLC2 phosphorylation (By similarity).</text>
</comment>
<comment type="catalytic activity">
    <reaction evidence="13">
        <text>L-seryl-[protein] + ATP = O-phospho-L-seryl-[protein] + ADP + H(+)</text>
        <dbReference type="Rhea" id="RHEA:17989"/>
        <dbReference type="Rhea" id="RHEA-COMP:9863"/>
        <dbReference type="Rhea" id="RHEA-COMP:11604"/>
        <dbReference type="ChEBI" id="CHEBI:15378"/>
        <dbReference type="ChEBI" id="CHEBI:29999"/>
        <dbReference type="ChEBI" id="CHEBI:30616"/>
        <dbReference type="ChEBI" id="CHEBI:83421"/>
        <dbReference type="ChEBI" id="CHEBI:456216"/>
        <dbReference type="EC" id="2.7.11.1"/>
    </reaction>
</comment>
<comment type="catalytic activity">
    <reaction evidence="13">
        <text>L-threonyl-[protein] + ATP = O-phospho-L-threonyl-[protein] + ADP + H(+)</text>
        <dbReference type="Rhea" id="RHEA:46608"/>
        <dbReference type="Rhea" id="RHEA-COMP:11060"/>
        <dbReference type="Rhea" id="RHEA-COMP:11605"/>
        <dbReference type="ChEBI" id="CHEBI:15378"/>
        <dbReference type="ChEBI" id="CHEBI:30013"/>
        <dbReference type="ChEBI" id="CHEBI:30616"/>
        <dbReference type="ChEBI" id="CHEBI:61977"/>
        <dbReference type="ChEBI" id="CHEBI:456216"/>
        <dbReference type="EC" id="2.7.11.1"/>
    </reaction>
</comment>
<comment type="cofactor">
    <cofactor evidence="13">
        <name>Mg(2+)</name>
        <dbReference type="ChEBI" id="CHEBI:18420"/>
    </cofactor>
</comment>
<comment type="activity regulation">
    <text evidence="3">Maintained in an inactive, closed conformation by an interaction between the kinase domain and the negative autoregulatory C-terminal coiled-coil region. Agonist binding to the phorbol ester binding site disrupts this, releasing the kinase domain to allow N-terminus-mediated dimerization and kinase activation by transautophosphorylation (By similarity).</text>
</comment>
<comment type="subunit">
    <text evidence="1">Homodimer and homotetramer via the coiled coil regions. Interacts tightly with GTP-bound but not GDP-bound CDC42 (By similarity).</text>
</comment>
<comment type="interaction">
    <interactant intactId="EBI-689124">
        <id>Q6DT37</id>
    </interactant>
    <interactant intactId="EBI-356402">
        <id>Q9UHD2</id>
        <label>TBK1</label>
    </interactant>
    <organismsDiffer>false</organismsDiffer>
    <experiments>3</experiments>
</comment>
<comment type="subcellular location">
    <subcellularLocation>
        <location evidence="13">Cytoplasm</location>
    </subcellularLocation>
    <text>Concentrates at the leading edge of cells.</text>
</comment>
<comment type="tissue specificity">
    <text evidence="13">Expressed in heart and skeletal muscle.</text>
</comment>
<comment type="similarity">
    <text evidence="15">Belongs to the protein kinase superfamily. AGC Ser/Thr protein kinase family. DMPK subfamily.</text>
</comment>
<dbReference type="EC" id="2.7.11.1"/>
<dbReference type="EMBL" id="AY648038">
    <property type="protein sequence ID" value="AAT67172.1"/>
    <property type="molecule type" value="mRNA"/>
</dbReference>
<dbReference type="EMBL" id="AP001187">
    <property type="status" value="NOT_ANNOTATED_CDS"/>
    <property type="molecule type" value="Genomic_DNA"/>
</dbReference>
<dbReference type="EMBL" id="Y12337">
    <property type="protein sequence ID" value="CAA73006.1"/>
    <property type="molecule type" value="mRNA"/>
</dbReference>
<dbReference type="CCDS" id="CCDS31601.1"/>
<dbReference type="RefSeq" id="NP_059995.2">
    <property type="nucleotide sequence ID" value="NM_017525.3"/>
</dbReference>
<dbReference type="SMR" id="Q6DT37"/>
<dbReference type="BioGRID" id="120719">
    <property type="interactions" value="55"/>
</dbReference>
<dbReference type="FunCoup" id="Q6DT37">
    <property type="interactions" value="118"/>
</dbReference>
<dbReference type="IntAct" id="Q6DT37">
    <property type="interactions" value="24"/>
</dbReference>
<dbReference type="MINT" id="Q6DT37"/>
<dbReference type="STRING" id="9606.ENSP00000345133"/>
<dbReference type="BindingDB" id="Q6DT37"/>
<dbReference type="ChEMBL" id="CHEMBL5615"/>
<dbReference type="DrugBank" id="DB12010">
    <property type="generic name" value="Fostamatinib"/>
</dbReference>
<dbReference type="DrugCentral" id="Q6DT37"/>
<dbReference type="GlyGen" id="Q6DT37">
    <property type="glycosylation" value="1 site, 1 O-linked glycan (1 site)"/>
</dbReference>
<dbReference type="iPTMnet" id="Q6DT37"/>
<dbReference type="PhosphoSitePlus" id="Q6DT37"/>
<dbReference type="BioMuta" id="CDC42BPG"/>
<dbReference type="DMDM" id="290457650"/>
<dbReference type="CPTAC" id="non-CPTAC-5991"/>
<dbReference type="CPTAC" id="non-CPTAC-5992"/>
<dbReference type="jPOST" id="Q6DT37"/>
<dbReference type="MassIVE" id="Q6DT37"/>
<dbReference type="PaxDb" id="9606-ENSP00000345133"/>
<dbReference type="PeptideAtlas" id="Q6DT37"/>
<dbReference type="ProteomicsDB" id="66255"/>
<dbReference type="Pumba" id="Q6DT37"/>
<dbReference type="Antibodypedia" id="15651">
    <property type="antibodies" value="40 antibodies from 15 providers"/>
</dbReference>
<dbReference type="DNASU" id="55561"/>
<dbReference type="Ensembl" id="ENST00000342711.6">
    <property type="protein sequence ID" value="ENSP00000345133.5"/>
    <property type="gene ID" value="ENSG00000171219.9"/>
</dbReference>
<dbReference type="GeneID" id="55561"/>
<dbReference type="KEGG" id="hsa:55561"/>
<dbReference type="MANE-Select" id="ENST00000342711.6">
    <property type="protein sequence ID" value="ENSP00000345133.5"/>
    <property type="RefSeq nucleotide sequence ID" value="NM_017525.3"/>
    <property type="RefSeq protein sequence ID" value="NP_059995.2"/>
</dbReference>
<dbReference type="UCSC" id="uc001obs.5">
    <property type="organism name" value="human"/>
</dbReference>
<dbReference type="AGR" id="HGNC:29829"/>
<dbReference type="CTD" id="55561"/>
<dbReference type="DisGeNET" id="55561"/>
<dbReference type="GeneCards" id="CDC42BPG"/>
<dbReference type="HGNC" id="HGNC:29829">
    <property type="gene designation" value="CDC42BPG"/>
</dbReference>
<dbReference type="HPA" id="ENSG00000171219">
    <property type="expression patterns" value="Tissue enhanced (brain, skin)"/>
</dbReference>
<dbReference type="MIM" id="613991">
    <property type="type" value="gene"/>
</dbReference>
<dbReference type="neXtProt" id="NX_Q6DT37"/>
<dbReference type="OpenTargets" id="ENSG00000171219"/>
<dbReference type="PharmGKB" id="PA134901493"/>
<dbReference type="VEuPathDB" id="HostDB:ENSG00000171219"/>
<dbReference type="eggNOG" id="KOG0612">
    <property type="taxonomic scope" value="Eukaryota"/>
</dbReference>
<dbReference type="GeneTree" id="ENSGT01030000234517"/>
<dbReference type="HOGENOM" id="CLU_000288_140_3_1"/>
<dbReference type="InParanoid" id="Q6DT37"/>
<dbReference type="OMA" id="PWQHRIR"/>
<dbReference type="OrthoDB" id="2156623at2759"/>
<dbReference type="PAN-GO" id="Q6DT37">
    <property type="GO annotations" value="5 GO annotations based on evolutionary models"/>
</dbReference>
<dbReference type="PhylomeDB" id="Q6DT37"/>
<dbReference type="TreeFam" id="TF313551"/>
<dbReference type="PathwayCommons" id="Q6DT37"/>
<dbReference type="SignaLink" id="Q6DT37"/>
<dbReference type="BioGRID-ORCS" id="55561">
    <property type="hits" value="11 hits in 1183 CRISPR screens"/>
</dbReference>
<dbReference type="ChiTaRS" id="CDC42BPG">
    <property type="organism name" value="human"/>
</dbReference>
<dbReference type="GenomeRNAi" id="55561"/>
<dbReference type="Pharos" id="Q6DT37">
    <property type="development level" value="Tchem"/>
</dbReference>
<dbReference type="PRO" id="PR:Q6DT37"/>
<dbReference type="Proteomes" id="UP000005640">
    <property type="component" value="Chromosome 11"/>
</dbReference>
<dbReference type="RNAct" id="Q6DT37">
    <property type="molecule type" value="protein"/>
</dbReference>
<dbReference type="Bgee" id="ENSG00000171219">
    <property type="expression patterns" value="Expressed in skin of abdomen and 97 other cell types or tissues"/>
</dbReference>
<dbReference type="GO" id="GO:0031252">
    <property type="term" value="C:cell leading edge"/>
    <property type="evidence" value="ECO:0000314"/>
    <property type="project" value="UniProtKB"/>
</dbReference>
<dbReference type="GO" id="GO:0034451">
    <property type="term" value="C:centriolar satellite"/>
    <property type="evidence" value="ECO:0000314"/>
    <property type="project" value="HPA"/>
</dbReference>
<dbReference type="GO" id="GO:0005737">
    <property type="term" value="C:cytoplasm"/>
    <property type="evidence" value="ECO:0000318"/>
    <property type="project" value="GO_Central"/>
</dbReference>
<dbReference type="GO" id="GO:0005856">
    <property type="term" value="C:cytoskeleton"/>
    <property type="evidence" value="ECO:0000318"/>
    <property type="project" value="GO_Central"/>
</dbReference>
<dbReference type="GO" id="GO:0005829">
    <property type="term" value="C:cytosol"/>
    <property type="evidence" value="ECO:0000314"/>
    <property type="project" value="HPA"/>
</dbReference>
<dbReference type="GO" id="GO:0005524">
    <property type="term" value="F:ATP binding"/>
    <property type="evidence" value="ECO:0000314"/>
    <property type="project" value="UniProtKB"/>
</dbReference>
<dbReference type="GO" id="GO:0000287">
    <property type="term" value="F:magnesium ion binding"/>
    <property type="evidence" value="ECO:0000314"/>
    <property type="project" value="UniProtKB"/>
</dbReference>
<dbReference type="GO" id="GO:0106310">
    <property type="term" value="F:protein serine kinase activity"/>
    <property type="evidence" value="ECO:0007669"/>
    <property type="project" value="RHEA"/>
</dbReference>
<dbReference type="GO" id="GO:0004674">
    <property type="term" value="F:protein serine/threonine kinase activity"/>
    <property type="evidence" value="ECO:0000314"/>
    <property type="project" value="UniProtKB"/>
</dbReference>
<dbReference type="GO" id="GO:0008270">
    <property type="term" value="F:zinc ion binding"/>
    <property type="evidence" value="ECO:0007669"/>
    <property type="project" value="UniProtKB-KW"/>
</dbReference>
<dbReference type="GO" id="GO:0030036">
    <property type="term" value="P:actin cytoskeleton organization"/>
    <property type="evidence" value="ECO:0000250"/>
    <property type="project" value="UniProtKB"/>
</dbReference>
<dbReference type="GO" id="GO:0031032">
    <property type="term" value="P:actomyosin structure organization"/>
    <property type="evidence" value="ECO:0000318"/>
    <property type="project" value="GO_Central"/>
</dbReference>
<dbReference type="GO" id="GO:0006468">
    <property type="term" value="P:protein phosphorylation"/>
    <property type="evidence" value="ECO:0000314"/>
    <property type="project" value="UniProtKB"/>
</dbReference>
<dbReference type="CDD" id="cd20866">
    <property type="entry name" value="C1_MRCKgamma"/>
    <property type="match status" value="1"/>
</dbReference>
<dbReference type="CDD" id="cd01243">
    <property type="entry name" value="PH_MRCK"/>
    <property type="match status" value="1"/>
</dbReference>
<dbReference type="CDD" id="cd05597">
    <property type="entry name" value="STKc_DMPK_like"/>
    <property type="match status" value="1"/>
</dbReference>
<dbReference type="FunFam" id="1.20.5.340:FF:000031">
    <property type="entry name" value="CDC42 binding protein kinase gamma"/>
    <property type="match status" value="1"/>
</dbReference>
<dbReference type="FunFam" id="1.10.510.10:FF:000014">
    <property type="entry name" value="Non-specific serine/threonine protein kinase"/>
    <property type="match status" value="1"/>
</dbReference>
<dbReference type="FunFam" id="3.30.200.20:FF:000017">
    <property type="entry name" value="Non-specific serine/threonine protein kinase"/>
    <property type="match status" value="1"/>
</dbReference>
<dbReference type="FunFam" id="2.30.29.30:FF:000242">
    <property type="entry name" value="serine/threonine-protein kinase MRCK gamma isoform X1"/>
    <property type="match status" value="1"/>
</dbReference>
<dbReference type="FunFam" id="3.30.60.20:FF:000049">
    <property type="entry name" value="serine/threonine-protein kinase MRCK gamma isoform X2"/>
    <property type="match status" value="1"/>
</dbReference>
<dbReference type="Gene3D" id="1.20.5.340">
    <property type="match status" value="1"/>
</dbReference>
<dbReference type="Gene3D" id="3.30.60.20">
    <property type="match status" value="1"/>
</dbReference>
<dbReference type="Gene3D" id="3.30.200.20">
    <property type="entry name" value="Phosphorylase Kinase, domain 1"/>
    <property type="match status" value="1"/>
</dbReference>
<dbReference type="Gene3D" id="2.30.29.30">
    <property type="entry name" value="Pleckstrin-homology domain (PH domain)/Phosphotyrosine-binding domain (PTB)"/>
    <property type="match status" value="1"/>
</dbReference>
<dbReference type="Gene3D" id="1.10.510.10">
    <property type="entry name" value="Transferase(Phosphotransferase) domain 1"/>
    <property type="match status" value="1"/>
</dbReference>
<dbReference type="InterPro" id="IPR000961">
    <property type="entry name" value="AGC-kinase_C"/>
</dbReference>
<dbReference type="InterPro" id="IPR046349">
    <property type="entry name" value="C1-like_sf"/>
</dbReference>
<dbReference type="InterPro" id="IPR001180">
    <property type="entry name" value="CNH_dom"/>
</dbReference>
<dbReference type="InterPro" id="IPR000095">
    <property type="entry name" value="CRIB_dom"/>
</dbReference>
<dbReference type="InterPro" id="IPR011009">
    <property type="entry name" value="Kinase-like_dom_sf"/>
</dbReference>
<dbReference type="InterPro" id="IPR014930">
    <property type="entry name" value="Myotonic_dystrophy_kinase_coil"/>
</dbReference>
<dbReference type="InterPro" id="IPR002219">
    <property type="entry name" value="PE/DAG-bd"/>
</dbReference>
<dbReference type="InterPro" id="IPR011993">
    <property type="entry name" value="PH-like_dom_sf"/>
</dbReference>
<dbReference type="InterPro" id="IPR001849">
    <property type="entry name" value="PH_domain"/>
</dbReference>
<dbReference type="InterPro" id="IPR017892">
    <property type="entry name" value="Pkinase_C"/>
</dbReference>
<dbReference type="InterPro" id="IPR000719">
    <property type="entry name" value="Prot_kinase_dom"/>
</dbReference>
<dbReference type="InterPro" id="IPR017441">
    <property type="entry name" value="Protein_kinase_ATP_BS"/>
</dbReference>
<dbReference type="InterPro" id="IPR050839">
    <property type="entry name" value="Rho-assoc_Ser/Thr_Kinase"/>
</dbReference>
<dbReference type="InterPro" id="IPR008271">
    <property type="entry name" value="Ser/Thr_kinase_AS"/>
</dbReference>
<dbReference type="PANTHER" id="PTHR22988">
    <property type="entry name" value="MYOTONIC DYSTROPHY S/T KINASE-RELATED"/>
    <property type="match status" value="1"/>
</dbReference>
<dbReference type="PANTHER" id="PTHR22988:SF22">
    <property type="entry name" value="SERINE_THREONINE-PROTEIN KINASE MRCK GAMMA"/>
    <property type="match status" value="1"/>
</dbReference>
<dbReference type="Pfam" id="PF00130">
    <property type="entry name" value="C1_1"/>
    <property type="match status" value="1"/>
</dbReference>
<dbReference type="Pfam" id="PF00780">
    <property type="entry name" value="CNH"/>
    <property type="match status" value="1"/>
</dbReference>
<dbReference type="Pfam" id="PF08826">
    <property type="entry name" value="DMPK_coil"/>
    <property type="match status" value="1"/>
</dbReference>
<dbReference type="Pfam" id="PF25346">
    <property type="entry name" value="PH_MRCK"/>
    <property type="match status" value="1"/>
</dbReference>
<dbReference type="Pfam" id="PF00069">
    <property type="entry name" value="Pkinase"/>
    <property type="match status" value="1"/>
</dbReference>
<dbReference type="Pfam" id="PF00433">
    <property type="entry name" value="Pkinase_C"/>
    <property type="match status" value="1"/>
</dbReference>
<dbReference type="SMART" id="SM00109">
    <property type="entry name" value="C1"/>
    <property type="match status" value="1"/>
</dbReference>
<dbReference type="SMART" id="SM00036">
    <property type="entry name" value="CNH"/>
    <property type="match status" value="1"/>
</dbReference>
<dbReference type="SMART" id="SM00233">
    <property type="entry name" value="PH"/>
    <property type="match status" value="1"/>
</dbReference>
<dbReference type="SMART" id="SM00133">
    <property type="entry name" value="S_TK_X"/>
    <property type="match status" value="1"/>
</dbReference>
<dbReference type="SMART" id="SM00220">
    <property type="entry name" value="S_TKc"/>
    <property type="match status" value="1"/>
</dbReference>
<dbReference type="SUPFAM" id="SSF57889">
    <property type="entry name" value="Cysteine-rich domain"/>
    <property type="match status" value="1"/>
</dbReference>
<dbReference type="SUPFAM" id="SSF50729">
    <property type="entry name" value="PH domain-like"/>
    <property type="match status" value="1"/>
</dbReference>
<dbReference type="SUPFAM" id="SSF56112">
    <property type="entry name" value="Protein kinase-like (PK-like)"/>
    <property type="match status" value="1"/>
</dbReference>
<dbReference type="PROSITE" id="PS51285">
    <property type="entry name" value="AGC_KINASE_CTER"/>
    <property type="match status" value="1"/>
</dbReference>
<dbReference type="PROSITE" id="PS50219">
    <property type="entry name" value="CNH"/>
    <property type="match status" value="1"/>
</dbReference>
<dbReference type="PROSITE" id="PS50108">
    <property type="entry name" value="CRIB"/>
    <property type="match status" value="1"/>
</dbReference>
<dbReference type="PROSITE" id="PS50003">
    <property type="entry name" value="PH_DOMAIN"/>
    <property type="match status" value="1"/>
</dbReference>
<dbReference type="PROSITE" id="PS00107">
    <property type="entry name" value="PROTEIN_KINASE_ATP"/>
    <property type="match status" value="1"/>
</dbReference>
<dbReference type="PROSITE" id="PS50011">
    <property type="entry name" value="PROTEIN_KINASE_DOM"/>
    <property type="match status" value="1"/>
</dbReference>
<dbReference type="PROSITE" id="PS00108">
    <property type="entry name" value="PROTEIN_KINASE_ST"/>
    <property type="match status" value="1"/>
</dbReference>
<dbReference type="PROSITE" id="PS00479">
    <property type="entry name" value="ZF_DAG_PE_1"/>
    <property type="match status" value="1"/>
</dbReference>
<dbReference type="PROSITE" id="PS50081">
    <property type="entry name" value="ZF_DAG_PE_2"/>
    <property type="match status" value="1"/>
</dbReference>
<accession>Q6DT37</accession>
<accession>O00565</accession>
<evidence type="ECO:0000250" key="1"/>
<evidence type="ECO:0000250" key="2">
    <source>
        <dbReference type="UniProtKB" id="P54265"/>
    </source>
</evidence>
<evidence type="ECO:0000250" key="3">
    <source>
        <dbReference type="UniProtKB" id="Q5VT25"/>
    </source>
</evidence>
<evidence type="ECO:0000255" key="4"/>
<evidence type="ECO:0000255" key="5">
    <source>
        <dbReference type="PROSITE-ProRule" id="PRU00057"/>
    </source>
</evidence>
<evidence type="ECO:0000255" key="6">
    <source>
        <dbReference type="PROSITE-ProRule" id="PRU00145"/>
    </source>
</evidence>
<evidence type="ECO:0000255" key="7">
    <source>
        <dbReference type="PROSITE-ProRule" id="PRU00159"/>
    </source>
</evidence>
<evidence type="ECO:0000255" key="8">
    <source>
        <dbReference type="PROSITE-ProRule" id="PRU00226"/>
    </source>
</evidence>
<evidence type="ECO:0000255" key="9">
    <source>
        <dbReference type="PROSITE-ProRule" id="PRU00618"/>
    </source>
</evidence>
<evidence type="ECO:0000255" key="10">
    <source>
        <dbReference type="PROSITE-ProRule" id="PRU00795"/>
    </source>
</evidence>
<evidence type="ECO:0000255" key="11">
    <source>
        <dbReference type="PROSITE-ProRule" id="PRU10027"/>
    </source>
</evidence>
<evidence type="ECO:0000256" key="12">
    <source>
        <dbReference type="SAM" id="MobiDB-lite"/>
    </source>
</evidence>
<evidence type="ECO:0000269" key="13">
    <source>
    </source>
</evidence>
<evidence type="ECO:0000269" key="14">
    <source>
    </source>
</evidence>
<evidence type="ECO:0000305" key="15"/>
<evidence type="ECO:0000312" key="16">
    <source>
        <dbReference type="EMBL" id="AAT67172.1"/>
    </source>
</evidence>
<evidence type="ECO:0000312" key="17">
    <source>
        <dbReference type="EMBL" id="CAA73006.1"/>
    </source>
</evidence>
<evidence type="ECO:0000312" key="18">
    <source>
        <dbReference type="HGNC" id="HGNC:29829"/>
    </source>
</evidence>
<evidence type="ECO:0007744" key="19">
    <source>
    </source>
</evidence>